<reference key="1">
    <citation type="journal article" date="2009" name="J. Bacteriol.">
        <title>The genome of Burkholderia cenocepacia J2315, an epidemic pathogen of cystic fibrosis patients.</title>
        <authorList>
            <person name="Holden M.T."/>
            <person name="Seth-Smith H.M."/>
            <person name="Crossman L.C."/>
            <person name="Sebaihia M."/>
            <person name="Bentley S.D."/>
            <person name="Cerdeno-Tarraga A.M."/>
            <person name="Thomson N.R."/>
            <person name="Bason N."/>
            <person name="Quail M.A."/>
            <person name="Sharp S."/>
            <person name="Cherevach I."/>
            <person name="Churcher C."/>
            <person name="Goodhead I."/>
            <person name="Hauser H."/>
            <person name="Holroyd N."/>
            <person name="Mungall K."/>
            <person name="Scott P."/>
            <person name="Walker D."/>
            <person name="White B."/>
            <person name="Rose H."/>
            <person name="Iversen P."/>
            <person name="Mil-Homens D."/>
            <person name="Rocha E.P."/>
            <person name="Fialho A.M."/>
            <person name="Baldwin A."/>
            <person name="Dowson C."/>
            <person name="Barrell B.G."/>
            <person name="Govan J.R."/>
            <person name="Vandamme P."/>
            <person name="Hart C.A."/>
            <person name="Mahenthiralingam E."/>
            <person name="Parkhill J."/>
        </authorList>
    </citation>
    <scope>NUCLEOTIDE SEQUENCE [LARGE SCALE GENOMIC DNA]</scope>
    <source>
        <strain>ATCC BAA-245 / DSM 16553 / LMG 16656 / NCTC 13227 / J2315 / CF5610</strain>
    </source>
</reference>
<sequence length="130" mass="14316">MIGNWNYGTGRRKSAVARVFIKAGKGDIIVNGKPIADYFSRETSLMIVRQPLELTNHGQTFDIKVNVNGGGETGQAGAVRHGITRALIDYDATLKPSLSSAGFVTRDAREVERKKVGLRKARRAKQFSKR</sequence>
<comment type="similarity">
    <text evidence="1">Belongs to the universal ribosomal protein uS9 family.</text>
</comment>
<name>RS9_BURCJ</name>
<keyword id="KW-0687">Ribonucleoprotein</keyword>
<keyword id="KW-0689">Ribosomal protein</keyword>
<dbReference type="EMBL" id="AM747720">
    <property type="protein sequence ID" value="CAR53670.1"/>
    <property type="molecule type" value="Genomic_DNA"/>
</dbReference>
<dbReference type="RefSeq" id="WP_006476904.1">
    <property type="nucleotide sequence ID" value="NC_011000.1"/>
</dbReference>
<dbReference type="SMR" id="B4EET5"/>
<dbReference type="GeneID" id="93139380"/>
<dbReference type="KEGG" id="bcj:BCAL3347"/>
<dbReference type="eggNOG" id="COG0103">
    <property type="taxonomic scope" value="Bacteria"/>
</dbReference>
<dbReference type="HOGENOM" id="CLU_046483_2_1_4"/>
<dbReference type="BioCyc" id="BCEN216591:G1G1V-3723-MONOMER"/>
<dbReference type="Proteomes" id="UP000001035">
    <property type="component" value="Chromosome 1"/>
</dbReference>
<dbReference type="GO" id="GO:0022627">
    <property type="term" value="C:cytosolic small ribosomal subunit"/>
    <property type="evidence" value="ECO:0007669"/>
    <property type="project" value="TreeGrafter"/>
</dbReference>
<dbReference type="GO" id="GO:0003723">
    <property type="term" value="F:RNA binding"/>
    <property type="evidence" value="ECO:0007669"/>
    <property type="project" value="TreeGrafter"/>
</dbReference>
<dbReference type="GO" id="GO:0003735">
    <property type="term" value="F:structural constituent of ribosome"/>
    <property type="evidence" value="ECO:0007669"/>
    <property type="project" value="InterPro"/>
</dbReference>
<dbReference type="GO" id="GO:0006412">
    <property type="term" value="P:translation"/>
    <property type="evidence" value="ECO:0007669"/>
    <property type="project" value="UniProtKB-UniRule"/>
</dbReference>
<dbReference type="FunFam" id="3.30.230.10:FF:000001">
    <property type="entry name" value="30S ribosomal protein S9"/>
    <property type="match status" value="1"/>
</dbReference>
<dbReference type="Gene3D" id="3.30.230.10">
    <property type="match status" value="1"/>
</dbReference>
<dbReference type="HAMAP" id="MF_00532_B">
    <property type="entry name" value="Ribosomal_uS9_B"/>
    <property type="match status" value="1"/>
</dbReference>
<dbReference type="InterPro" id="IPR020568">
    <property type="entry name" value="Ribosomal_Su5_D2-typ_SF"/>
</dbReference>
<dbReference type="InterPro" id="IPR000754">
    <property type="entry name" value="Ribosomal_uS9"/>
</dbReference>
<dbReference type="InterPro" id="IPR023035">
    <property type="entry name" value="Ribosomal_uS9_bac/plastid"/>
</dbReference>
<dbReference type="InterPro" id="IPR020574">
    <property type="entry name" value="Ribosomal_uS9_CS"/>
</dbReference>
<dbReference type="InterPro" id="IPR014721">
    <property type="entry name" value="Ribsml_uS5_D2-typ_fold_subgr"/>
</dbReference>
<dbReference type="NCBIfam" id="NF001099">
    <property type="entry name" value="PRK00132.1"/>
    <property type="match status" value="1"/>
</dbReference>
<dbReference type="PANTHER" id="PTHR21569">
    <property type="entry name" value="RIBOSOMAL PROTEIN S9"/>
    <property type="match status" value="1"/>
</dbReference>
<dbReference type="PANTHER" id="PTHR21569:SF1">
    <property type="entry name" value="SMALL RIBOSOMAL SUBUNIT PROTEIN US9M"/>
    <property type="match status" value="1"/>
</dbReference>
<dbReference type="Pfam" id="PF00380">
    <property type="entry name" value="Ribosomal_S9"/>
    <property type="match status" value="1"/>
</dbReference>
<dbReference type="SUPFAM" id="SSF54211">
    <property type="entry name" value="Ribosomal protein S5 domain 2-like"/>
    <property type="match status" value="1"/>
</dbReference>
<dbReference type="PROSITE" id="PS00360">
    <property type="entry name" value="RIBOSOMAL_S9"/>
    <property type="match status" value="1"/>
</dbReference>
<protein>
    <recommendedName>
        <fullName evidence="1">Small ribosomal subunit protein uS9</fullName>
    </recommendedName>
    <alternativeName>
        <fullName evidence="2">30S ribosomal protein S9</fullName>
    </alternativeName>
</protein>
<organism>
    <name type="scientific">Burkholderia cenocepacia (strain ATCC BAA-245 / DSM 16553 / LMG 16656 / NCTC 13227 / J2315 / CF5610)</name>
    <name type="common">Burkholderia cepacia (strain J2315)</name>
    <dbReference type="NCBI Taxonomy" id="216591"/>
    <lineage>
        <taxon>Bacteria</taxon>
        <taxon>Pseudomonadati</taxon>
        <taxon>Pseudomonadota</taxon>
        <taxon>Betaproteobacteria</taxon>
        <taxon>Burkholderiales</taxon>
        <taxon>Burkholderiaceae</taxon>
        <taxon>Burkholderia</taxon>
        <taxon>Burkholderia cepacia complex</taxon>
    </lineage>
</organism>
<proteinExistence type="inferred from homology"/>
<feature type="chain" id="PRO_1000128093" description="Small ribosomal subunit protein uS9">
    <location>
        <begin position="1"/>
        <end position="130"/>
    </location>
</feature>
<gene>
    <name evidence="1" type="primary">rpsI</name>
    <name type="ordered locus">BceJ2315_32860</name>
    <name type="ORF">BCAL3347</name>
</gene>
<evidence type="ECO:0000255" key="1">
    <source>
        <dbReference type="HAMAP-Rule" id="MF_00532"/>
    </source>
</evidence>
<evidence type="ECO:0000305" key="2"/>
<accession>B4EET5</accession>